<comment type="function">
    <text evidence="1">Bifunctional serine/threonine kinase and phosphorylase involved in the regulation of the phosphoenolpyruvate synthase (PEPS) by catalyzing its phosphorylation/dephosphorylation.</text>
</comment>
<comment type="catalytic activity">
    <reaction evidence="1">
        <text>[pyruvate, water dikinase] + ADP = [pyruvate, water dikinase]-phosphate + AMP + H(+)</text>
        <dbReference type="Rhea" id="RHEA:46020"/>
        <dbReference type="Rhea" id="RHEA-COMP:11425"/>
        <dbReference type="Rhea" id="RHEA-COMP:11426"/>
        <dbReference type="ChEBI" id="CHEBI:15378"/>
        <dbReference type="ChEBI" id="CHEBI:43176"/>
        <dbReference type="ChEBI" id="CHEBI:68546"/>
        <dbReference type="ChEBI" id="CHEBI:456215"/>
        <dbReference type="ChEBI" id="CHEBI:456216"/>
        <dbReference type="EC" id="2.7.11.33"/>
    </reaction>
</comment>
<comment type="catalytic activity">
    <reaction evidence="1">
        <text>[pyruvate, water dikinase]-phosphate + phosphate + H(+) = [pyruvate, water dikinase] + diphosphate</text>
        <dbReference type="Rhea" id="RHEA:48580"/>
        <dbReference type="Rhea" id="RHEA-COMP:11425"/>
        <dbReference type="Rhea" id="RHEA-COMP:11426"/>
        <dbReference type="ChEBI" id="CHEBI:15378"/>
        <dbReference type="ChEBI" id="CHEBI:33019"/>
        <dbReference type="ChEBI" id="CHEBI:43176"/>
        <dbReference type="ChEBI" id="CHEBI:43474"/>
        <dbReference type="ChEBI" id="CHEBI:68546"/>
        <dbReference type="EC" id="2.7.4.28"/>
    </reaction>
</comment>
<comment type="similarity">
    <text evidence="1">Belongs to the pyruvate, phosphate/water dikinase regulatory protein family. PSRP subfamily.</text>
</comment>
<protein>
    <recommendedName>
        <fullName evidence="1">Putative phosphoenolpyruvate synthase regulatory protein</fullName>
        <shortName evidence="1">PEP synthase regulatory protein</shortName>
        <shortName evidence="1">PSRP</shortName>
        <ecNumber evidence="1">2.7.11.33</ecNumber>
        <ecNumber evidence="1">2.7.4.28</ecNumber>
    </recommendedName>
    <alternativeName>
        <fullName evidence="1">Pyruvate, water dikinase regulatory protein</fullName>
    </alternativeName>
</protein>
<sequence>MKRTAFFISDGTGITAETLGQSLLAQFDSIPFNKFTRPYIDTPDKARTMVQQINAAAERDGMRPIIFDTIVNQDIREILATSNGFMIDIFSTFLSPLEQELTAHSSYSVGKSHSIGGNSNYMERIEAVNFALDNDDGARTHYYDKADLILVGVSRCGKTPTCLYMAMQFGIRAANYPLTEDDMERLQLPAVLKKHHNKLFGLTIDPDRLTAIRHERKPNSRYSSFAQCEFEVREVESLFRRENIPNINSTHFSVEEISAKILVEKGVERRFK</sequence>
<accession>B1J593</accession>
<organism>
    <name type="scientific">Pseudomonas putida (strain W619)</name>
    <dbReference type="NCBI Taxonomy" id="390235"/>
    <lineage>
        <taxon>Bacteria</taxon>
        <taxon>Pseudomonadati</taxon>
        <taxon>Pseudomonadota</taxon>
        <taxon>Gammaproteobacteria</taxon>
        <taxon>Pseudomonadales</taxon>
        <taxon>Pseudomonadaceae</taxon>
        <taxon>Pseudomonas</taxon>
    </lineage>
</organism>
<dbReference type="EC" id="2.7.11.33" evidence="1"/>
<dbReference type="EC" id="2.7.4.28" evidence="1"/>
<dbReference type="EMBL" id="CP000949">
    <property type="protein sequence ID" value="ACA72104.1"/>
    <property type="molecule type" value="Genomic_DNA"/>
</dbReference>
<dbReference type="SMR" id="B1J593"/>
<dbReference type="STRING" id="390235.PputW619_1599"/>
<dbReference type="KEGG" id="ppw:PputW619_1599"/>
<dbReference type="eggNOG" id="COG1806">
    <property type="taxonomic scope" value="Bacteria"/>
</dbReference>
<dbReference type="HOGENOM" id="CLU_046206_1_0_6"/>
<dbReference type="OrthoDB" id="9782201at2"/>
<dbReference type="GO" id="GO:0043531">
    <property type="term" value="F:ADP binding"/>
    <property type="evidence" value="ECO:0007669"/>
    <property type="project" value="UniProtKB-UniRule"/>
</dbReference>
<dbReference type="GO" id="GO:0005524">
    <property type="term" value="F:ATP binding"/>
    <property type="evidence" value="ECO:0007669"/>
    <property type="project" value="InterPro"/>
</dbReference>
<dbReference type="GO" id="GO:0016776">
    <property type="term" value="F:phosphotransferase activity, phosphate group as acceptor"/>
    <property type="evidence" value="ECO:0007669"/>
    <property type="project" value="UniProtKB-UniRule"/>
</dbReference>
<dbReference type="GO" id="GO:0004674">
    <property type="term" value="F:protein serine/threonine kinase activity"/>
    <property type="evidence" value="ECO:0007669"/>
    <property type="project" value="UniProtKB-UniRule"/>
</dbReference>
<dbReference type="HAMAP" id="MF_01062">
    <property type="entry name" value="PSRP"/>
    <property type="match status" value="1"/>
</dbReference>
<dbReference type="InterPro" id="IPR005177">
    <property type="entry name" value="Kinase-pyrophosphorylase"/>
</dbReference>
<dbReference type="InterPro" id="IPR026530">
    <property type="entry name" value="PSRP"/>
</dbReference>
<dbReference type="NCBIfam" id="NF003742">
    <property type="entry name" value="PRK05339.1"/>
    <property type="match status" value="1"/>
</dbReference>
<dbReference type="PANTHER" id="PTHR31756">
    <property type="entry name" value="PYRUVATE, PHOSPHATE DIKINASE REGULATORY PROTEIN 1, CHLOROPLASTIC"/>
    <property type="match status" value="1"/>
</dbReference>
<dbReference type="PANTHER" id="PTHR31756:SF3">
    <property type="entry name" value="PYRUVATE, PHOSPHATE DIKINASE REGULATORY PROTEIN 1, CHLOROPLASTIC"/>
    <property type="match status" value="1"/>
</dbReference>
<dbReference type="Pfam" id="PF03618">
    <property type="entry name" value="Kinase-PPPase"/>
    <property type="match status" value="1"/>
</dbReference>
<reference key="1">
    <citation type="submission" date="2008-02" db="EMBL/GenBank/DDBJ databases">
        <title>Complete sequence of Pseudomonas putida W619.</title>
        <authorList>
            <person name="Copeland A."/>
            <person name="Lucas S."/>
            <person name="Lapidus A."/>
            <person name="Barry K."/>
            <person name="Detter J.C."/>
            <person name="Glavina del Rio T."/>
            <person name="Dalin E."/>
            <person name="Tice H."/>
            <person name="Pitluck S."/>
            <person name="Chain P."/>
            <person name="Malfatti S."/>
            <person name="Shin M."/>
            <person name="Vergez L."/>
            <person name="Schmutz J."/>
            <person name="Larimer F."/>
            <person name="Land M."/>
            <person name="Hauser L."/>
            <person name="Kyrpides N."/>
            <person name="Kim E."/>
            <person name="Taghavi S."/>
            <person name="Vangronsveld D."/>
            <person name="van der Lelie D."/>
            <person name="Richardson P."/>
        </authorList>
    </citation>
    <scope>NUCLEOTIDE SEQUENCE [LARGE SCALE GENOMIC DNA]</scope>
    <source>
        <strain>W619</strain>
    </source>
</reference>
<name>PSRP_PSEPW</name>
<gene>
    <name type="ordered locus">PputW619_1599</name>
</gene>
<feature type="chain" id="PRO_1000136484" description="Putative phosphoenolpyruvate synthase regulatory protein">
    <location>
        <begin position="1"/>
        <end position="272"/>
    </location>
</feature>
<feature type="binding site" evidence="1">
    <location>
        <begin position="152"/>
        <end position="159"/>
    </location>
    <ligand>
        <name>ADP</name>
        <dbReference type="ChEBI" id="CHEBI:456216"/>
    </ligand>
</feature>
<proteinExistence type="inferred from homology"/>
<keyword id="KW-0418">Kinase</keyword>
<keyword id="KW-0547">Nucleotide-binding</keyword>
<keyword id="KW-0723">Serine/threonine-protein kinase</keyword>
<keyword id="KW-0808">Transferase</keyword>
<evidence type="ECO:0000255" key="1">
    <source>
        <dbReference type="HAMAP-Rule" id="MF_01062"/>
    </source>
</evidence>